<keyword id="KW-1267">Proteomics identification</keyword>
<keyword id="KW-1185">Reference proteome</keyword>
<feature type="chain" id="PRO_0000314905" description="CMT1A duplicated region transcript 15 protein">
    <location>
        <begin position="1"/>
        <end position="188"/>
    </location>
</feature>
<feature type="sequence variant" id="VAR_038121" description="In dbSNP:rs17679866.">
    <original>R</original>
    <variation>Q</variation>
    <location>
        <position position="24"/>
    </location>
</feature>
<feature type="sequence conflict" description="In Ref. 2; AAI46860." evidence="2" ref="2">
    <original>L</original>
    <variation>R</variation>
    <location>
        <position position="87"/>
    </location>
</feature>
<organism>
    <name type="scientific">Homo sapiens</name>
    <name type="common">Human</name>
    <dbReference type="NCBI Taxonomy" id="9606"/>
    <lineage>
        <taxon>Eukaryota</taxon>
        <taxon>Metazoa</taxon>
        <taxon>Chordata</taxon>
        <taxon>Craniata</taxon>
        <taxon>Vertebrata</taxon>
        <taxon>Euteleostomi</taxon>
        <taxon>Mammalia</taxon>
        <taxon>Eutheria</taxon>
        <taxon>Euarchontoglires</taxon>
        <taxon>Primates</taxon>
        <taxon>Haplorrhini</taxon>
        <taxon>Catarrhini</taxon>
        <taxon>Hominidae</taxon>
        <taxon>Homo</taxon>
    </lineage>
</organism>
<proteinExistence type="evidence at protein level"/>
<sequence length="188" mass="20651">MFSCCFPTSRGCCFRNGGSESLFRRCRRRLIPHPRRLSPVVIRRIQVPQDSLGQALAGQATPEIPLGLQLHTVLVQEIQELIEAQTLAPGPCAEVRALPAPAAEPEPAWEEAPPERALELEGAPAKDQTNEELPEITEVPESIKRRLGRRVPAATPAPRGNLLLQAWMRVHSWASRLFAPNVLPGTGP</sequence>
<reference key="1">
    <citation type="journal article" date="2001" name="Genome Res.">
        <title>The 1.4-Mb CMT1A duplication/HNPP deletion genomic region reveals unique genome architectural features and provides insights into the recent evolution of new genes.</title>
        <authorList>
            <person name="Inoue K."/>
            <person name="Dewar K."/>
            <person name="Katsanis N."/>
            <person name="Reiter L.T."/>
            <person name="Lander E.S."/>
            <person name="Devon K.L."/>
            <person name="Wyman D.W."/>
            <person name="Lupski J.R."/>
            <person name="Birren B."/>
        </authorList>
    </citation>
    <scope>NUCLEOTIDE SEQUENCE [GENOMIC DNA]</scope>
    <scope>TISSUE SPECIFICITY</scope>
</reference>
<reference key="2">
    <citation type="journal article" date="2004" name="Genome Res.">
        <title>The status, quality, and expansion of the NIH full-length cDNA project: the Mammalian Gene Collection (MGC).</title>
        <authorList>
            <consortium name="The MGC Project Team"/>
        </authorList>
    </citation>
    <scope>NUCLEOTIDE SEQUENCE [LARGE SCALE MRNA]</scope>
</reference>
<dbReference type="EMBL" id="AF355097">
    <property type="protein sequence ID" value="AAK39098.1"/>
    <property type="molecule type" value="Genomic_DNA"/>
</dbReference>
<dbReference type="EMBL" id="BC146859">
    <property type="protein sequence ID" value="AAI46860.1"/>
    <property type="molecule type" value="mRNA"/>
</dbReference>
<dbReference type="CCDS" id="CCDS32569.1"/>
<dbReference type="RefSeq" id="NP_001007531.1">
    <property type="nucleotide sequence ID" value="NM_001007530.3"/>
</dbReference>
<dbReference type="BioGRID" id="127013">
    <property type="interactions" value="14"/>
</dbReference>
<dbReference type="FunCoup" id="Q96T59">
    <property type="interactions" value="5"/>
</dbReference>
<dbReference type="IntAct" id="Q96T59">
    <property type="interactions" value="7"/>
</dbReference>
<dbReference type="MINT" id="Q96T59"/>
<dbReference type="STRING" id="9606.ENSP00000402355"/>
<dbReference type="GlyGen" id="Q96T59">
    <property type="glycosylation" value="1 site"/>
</dbReference>
<dbReference type="iPTMnet" id="Q96T59"/>
<dbReference type="PhosphoSitePlus" id="Q96T59"/>
<dbReference type="BioMuta" id="CDRT15"/>
<dbReference type="DMDM" id="74717324"/>
<dbReference type="MassIVE" id="Q96T59"/>
<dbReference type="PaxDb" id="9606-ENSP00000402355"/>
<dbReference type="PeptideAtlas" id="Q96T59"/>
<dbReference type="ProteomicsDB" id="78198"/>
<dbReference type="Antibodypedia" id="71685">
    <property type="antibodies" value="4 antibodies from 4 providers"/>
</dbReference>
<dbReference type="DNASU" id="146822"/>
<dbReference type="Ensembl" id="ENST00000420162.7">
    <property type="protein sequence ID" value="ENSP00000402355.3"/>
    <property type="gene ID" value="ENSG00000223510.7"/>
</dbReference>
<dbReference type="GeneID" id="146822"/>
<dbReference type="KEGG" id="hsa:146822"/>
<dbReference type="MANE-Select" id="ENST00000420162.7">
    <property type="protein sequence ID" value="ENSP00000402355.3"/>
    <property type="RefSeq nucleotide sequence ID" value="NM_001007530.3"/>
    <property type="RefSeq protein sequence ID" value="NP_001007531.1"/>
</dbReference>
<dbReference type="UCSC" id="uc010vvu.3">
    <property type="organism name" value="human"/>
</dbReference>
<dbReference type="AGR" id="HGNC:14395"/>
<dbReference type="CTD" id="146822"/>
<dbReference type="GeneCards" id="CDRT15"/>
<dbReference type="HGNC" id="HGNC:14395">
    <property type="gene designation" value="CDRT15"/>
</dbReference>
<dbReference type="HPA" id="ENSG00000223510">
    <property type="expression patterns" value="Tissue enriched (testis)"/>
</dbReference>
<dbReference type="MalaCards" id="CDRT15"/>
<dbReference type="neXtProt" id="NX_Q96T59"/>
<dbReference type="OpenTargets" id="ENSG00000223510"/>
<dbReference type="PharmGKB" id="PA26337"/>
<dbReference type="VEuPathDB" id="HostDB:ENSG00000223510"/>
<dbReference type="eggNOG" id="ENOG502TF2R">
    <property type="taxonomic scope" value="Eukaryota"/>
</dbReference>
<dbReference type="GeneTree" id="ENSGT00390000011755"/>
<dbReference type="HOGENOM" id="CLU_087008_0_0_1"/>
<dbReference type="InParanoid" id="Q96T59"/>
<dbReference type="OMA" id="IEAQTCA"/>
<dbReference type="OrthoDB" id="17489at9443"/>
<dbReference type="PAN-GO" id="Q96T59">
    <property type="GO annotations" value="0 GO annotations based on evolutionary models"/>
</dbReference>
<dbReference type="PhylomeDB" id="Q96T59"/>
<dbReference type="TreeFam" id="TF342212"/>
<dbReference type="PathwayCommons" id="Q96T59"/>
<dbReference type="SignaLink" id="Q96T59"/>
<dbReference type="BioGRID-ORCS" id="146822">
    <property type="hits" value="31 hits in 1101 CRISPR screens"/>
</dbReference>
<dbReference type="GenomeRNAi" id="146822"/>
<dbReference type="Pharos" id="Q96T59">
    <property type="development level" value="Tdark"/>
</dbReference>
<dbReference type="PRO" id="PR:Q96T59"/>
<dbReference type="Proteomes" id="UP000005640">
    <property type="component" value="Chromosome 17"/>
</dbReference>
<dbReference type="RNAct" id="Q96T59">
    <property type="molecule type" value="protein"/>
</dbReference>
<dbReference type="Bgee" id="ENSG00000223510">
    <property type="expression patterns" value="Expressed in right testis and 91 other cell types or tissues"/>
</dbReference>
<dbReference type="ExpressionAtlas" id="Q96T59">
    <property type="expression patterns" value="baseline and differential"/>
</dbReference>
<dbReference type="PANTHER" id="PTHR16471:SF3">
    <property type="entry name" value="CMT1A DUPLICATED REGION TRANSCRIPT 15 PROTEIN"/>
    <property type="match status" value="1"/>
</dbReference>
<dbReference type="PANTHER" id="PTHR16471">
    <property type="entry name" value="CMT1A DUPLICATED REGION TRANSCRIPT 15 PROTEIN-LIKE PROTEIN"/>
    <property type="match status" value="1"/>
</dbReference>
<gene>
    <name type="primary">CDRT15</name>
</gene>
<evidence type="ECO:0000269" key="1">
    <source>
    </source>
</evidence>
<evidence type="ECO:0000305" key="2"/>
<name>CDRTF_HUMAN</name>
<accession>Q96T59</accession>
<accession>B2RUU5</accession>
<protein>
    <recommendedName>
        <fullName>CMT1A duplicated region transcript 15 protein</fullName>
    </recommendedName>
</protein>
<comment type="tissue specificity">
    <text evidence="1">Expressed in fetal heart, kidney, liver, lung and spleen.</text>
</comment>